<feature type="chain" id="PRO_0000064475" description="AFA-III adhesin operon regulatory protein">
    <location>
        <begin position="1"/>
        <end position="101"/>
    </location>
</feature>
<name>AFAA_ECOLX</name>
<protein>
    <recommendedName>
        <fullName>AFA-III adhesin operon regulatory protein</fullName>
    </recommendedName>
</protein>
<gene>
    <name type="primary">afaA</name>
</gene>
<organism>
    <name type="scientific">Escherichia coli</name>
    <dbReference type="NCBI Taxonomy" id="562"/>
    <lineage>
        <taxon>Bacteria</taxon>
        <taxon>Pseudomonadati</taxon>
        <taxon>Pseudomonadota</taxon>
        <taxon>Gammaproteobacteria</taxon>
        <taxon>Enterobacterales</taxon>
        <taxon>Enterobacteriaceae</taxon>
        <taxon>Escherichia</taxon>
    </lineage>
</organism>
<reference key="1">
    <citation type="journal article" date="1994" name="J. Bacteriol.">
        <title>Nucleotide sequence of the afimbrial-adhesin-encoding afa-3 gene cluster and its translocation via flanking IS1 insertion sequences.</title>
        <authorList>
            <person name="Garcia M.-I."/>
            <person name="Labigne A."/>
            <person name="le Bouguenec C.L."/>
        </authorList>
    </citation>
    <scope>NUCLEOTIDE SEQUENCE [GENOMIC DNA]</scope>
    <source>
        <strain>A30 / UPEC</strain>
    </source>
</reference>
<evidence type="ECO:0000305" key="1"/>
<sequence length="101" mass="11743">MRERYLYLADTPQGILMSGQVPEYQFWLLAEISPVHSEKVINALRDYLVMGYNRMEACGRHSVSPGYFSGALKRFQRVSQTVYRLVPFYFPEAGHEVHRGE</sequence>
<comment type="function">
    <text>Regulates the transcription of genes involved in the biosynthesis of afimbrial adhesin-III.</text>
</comment>
<comment type="caution">
    <text evidence="1">It is uncertain whether Met-1 or Met-17 is the initiator.</text>
</comment>
<comment type="sequence caution" evidence="1">
    <conflict type="erroneous initiation">
        <sequence resource="EMBL-CDS" id="CAA54114"/>
    </conflict>
</comment>
<geneLocation type="plasmid">
    <name>pIL1055</name>
</geneLocation>
<accession>P53515</accession>
<dbReference type="EMBL" id="X76688">
    <property type="protein sequence ID" value="CAA54113.1"/>
    <property type="molecule type" value="Genomic_DNA"/>
</dbReference>
<dbReference type="EMBL" id="X76688">
    <property type="protein sequence ID" value="CAA54114.1"/>
    <property type="status" value="ALT_INIT"/>
    <property type="molecule type" value="Genomic_DNA"/>
</dbReference>
<dbReference type="PIR" id="D55545">
    <property type="entry name" value="D55545"/>
</dbReference>
<dbReference type="RefSeq" id="WP_001545784.1">
    <property type="nucleotide sequence ID" value="NZ_WSXD01000095.1"/>
</dbReference>
<dbReference type="SMR" id="P53515"/>
<dbReference type="GO" id="GO:0006355">
    <property type="term" value="P:regulation of DNA-templated transcription"/>
    <property type="evidence" value="ECO:0007669"/>
    <property type="project" value="InterPro"/>
</dbReference>
<dbReference type="Gene3D" id="1.10.10.2690">
    <property type="match status" value="1"/>
</dbReference>
<dbReference type="InterPro" id="IPR004356">
    <property type="entry name" value="Adhesin_operon_reg_prot"/>
</dbReference>
<dbReference type="InterPro" id="IPR053721">
    <property type="entry name" value="Fimbrial_Adhesin_Reg"/>
</dbReference>
<dbReference type="Pfam" id="PF03333">
    <property type="entry name" value="PapB"/>
    <property type="match status" value="1"/>
</dbReference>
<dbReference type="PRINTS" id="PR01554">
    <property type="entry name" value="FIMREGULATRY"/>
</dbReference>
<keyword id="KW-0010">Activator</keyword>
<keyword id="KW-0614">Plasmid</keyword>
<keyword id="KW-0804">Transcription</keyword>
<keyword id="KW-0805">Transcription regulation</keyword>
<proteinExistence type="predicted"/>